<reference key="1">
    <citation type="journal article" date="2005" name="Science">
        <title>Extensive DNA inversions in the B. fragilis genome control variable gene expression.</title>
        <authorList>
            <person name="Cerdeno-Tarraga A.-M."/>
            <person name="Patrick S."/>
            <person name="Crossman L.C."/>
            <person name="Blakely G."/>
            <person name="Abratt V."/>
            <person name="Lennard N."/>
            <person name="Poxton I."/>
            <person name="Duerden B."/>
            <person name="Harris B."/>
            <person name="Quail M.A."/>
            <person name="Barron A."/>
            <person name="Clark L."/>
            <person name="Corton C."/>
            <person name="Doggett J."/>
            <person name="Holden M.T.G."/>
            <person name="Larke N."/>
            <person name="Line A."/>
            <person name="Lord A."/>
            <person name="Norbertczak H."/>
            <person name="Ormond D."/>
            <person name="Price C."/>
            <person name="Rabbinowitsch E."/>
            <person name="Woodward J."/>
            <person name="Barrell B.G."/>
            <person name="Parkhill J."/>
        </authorList>
    </citation>
    <scope>NUCLEOTIDE SEQUENCE [LARGE SCALE GENOMIC DNA]</scope>
    <source>
        <strain>ATCC 25285 / DSM 2151 / CCUG 4856 / JCM 11019 / LMG 10263 / NCTC 9343 / Onslow / VPI 2553 / EN-2</strain>
    </source>
</reference>
<comment type="function">
    <text evidence="1">Involved in phosphonate degradation.</text>
</comment>
<comment type="catalytic activity">
    <reaction evidence="1">
        <text>(2-aminoethyl)phosphonate + pyruvate = phosphonoacetaldehyde + L-alanine</text>
        <dbReference type="Rhea" id="RHEA:17021"/>
        <dbReference type="ChEBI" id="CHEBI:15361"/>
        <dbReference type="ChEBI" id="CHEBI:57418"/>
        <dbReference type="ChEBI" id="CHEBI:57972"/>
        <dbReference type="ChEBI" id="CHEBI:58383"/>
        <dbReference type="EC" id="2.6.1.37"/>
    </reaction>
</comment>
<comment type="cofactor">
    <cofactor evidence="1">
        <name>pyridoxal 5'-phosphate</name>
        <dbReference type="ChEBI" id="CHEBI:597326"/>
    </cofactor>
</comment>
<comment type="subunit">
    <text evidence="1">Homodimer.</text>
</comment>
<comment type="similarity">
    <text evidence="1">Belongs to the class-V pyridoxal-phosphate-dependent aminotransferase family. PhnW subfamily.</text>
</comment>
<feature type="chain" id="PRO_0000286760" description="2-aminoethylphosphonate--pyruvate transaminase">
    <location>
        <begin position="1"/>
        <end position="362"/>
    </location>
</feature>
<feature type="modified residue" description="N6-(pyridoxal phosphate)lysine" evidence="1">
    <location>
        <position position="193"/>
    </location>
</feature>
<sequence length="362" mass="40560">MKPYLLLTPGPLTTSETVKETMMTDWCTWDEDYNLHIVESLRKELVGIATRNTEEYTSVLLQGSGTYCVEAVIGAAIGKNDKLLICSNGAYGDRMGNIAEYYHIDYELLAFDETEQVSVDYVDDYLSNNSDVTHVAFVHCETTTGILNPLKELAHVVKMPGKKLIVDAMSSFGGIPMDVSELGIDFLISSANKCIQGVPGFGFIIARRSELVRCKGVARSLSLDIYDQWETMEKGHGKWRFTSPTHVVRAFKQALTELIEEGGVEARHRRYCENHRVLVEGMRSLGFVTLLDDAIQSPIITSFLYPKTGFDFKAFYTALKSKGFVIYPGKISKADTFRIGNIGDVHPEDFARLVEVVRETEY</sequence>
<protein>
    <recommendedName>
        <fullName evidence="1">2-aminoethylphosphonate--pyruvate transaminase</fullName>
        <ecNumber evidence="1">2.6.1.37</ecNumber>
    </recommendedName>
    <alternativeName>
        <fullName evidence="1">2-aminoethylphosphonate aminotransferase</fullName>
    </alternativeName>
    <alternativeName>
        <fullName evidence="1">AEP transaminase</fullName>
        <shortName evidence="1">AEPT</shortName>
    </alternativeName>
</protein>
<evidence type="ECO:0000255" key="1">
    <source>
        <dbReference type="HAMAP-Rule" id="MF_01376"/>
    </source>
</evidence>
<accession>Q5L9Q0</accession>
<organism>
    <name type="scientific">Bacteroides fragilis (strain ATCC 25285 / DSM 2151 / CCUG 4856 / JCM 11019 / LMG 10263 / NCTC 9343 / Onslow / VPI 2553 / EN-2)</name>
    <dbReference type="NCBI Taxonomy" id="272559"/>
    <lineage>
        <taxon>Bacteria</taxon>
        <taxon>Pseudomonadati</taxon>
        <taxon>Bacteroidota</taxon>
        <taxon>Bacteroidia</taxon>
        <taxon>Bacteroidales</taxon>
        <taxon>Bacteroidaceae</taxon>
        <taxon>Bacteroides</taxon>
    </lineage>
</organism>
<keyword id="KW-0032">Aminotransferase</keyword>
<keyword id="KW-0663">Pyridoxal phosphate</keyword>
<keyword id="KW-0670">Pyruvate</keyword>
<keyword id="KW-0808">Transferase</keyword>
<gene>
    <name evidence="1" type="primary">phnW</name>
    <name type="ordered locus">BF3487</name>
</gene>
<dbReference type="EC" id="2.6.1.37" evidence="1"/>
<dbReference type="EMBL" id="CR626927">
    <property type="protein sequence ID" value="CAH09177.1"/>
    <property type="molecule type" value="Genomic_DNA"/>
</dbReference>
<dbReference type="RefSeq" id="WP_010993442.1">
    <property type="nucleotide sequence ID" value="NC_003228.3"/>
</dbReference>
<dbReference type="SMR" id="Q5L9Q0"/>
<dbReference type="PaxDb" id="272559-BF9343_3396"/>
<dbReference type="GeneID" id="60367169"/>
<dbReference type="KEGG" id="bfs:BF9343_3396"/>
<dbReference type="eggNOG" id="COG0075">
    <property type="taxonomic scope" value="Bacteria"/>
</dbReference>
<dbReference type="HOGENOM" id="CLU_027686_3_1_10"/>
<dbReference type="Proteomes" id="UP000006731">
    <property type="component" value="Chromosome"/>
</dbReference>
<dbReference type="GO" id="GO:0047304">
    <property type="term" value="F:2-aminoethylphosphonate-pyruvate transaminase activity"/>
    <property type="evidence" value="ECO:0007669"/>
    <property type="project" value="UniProtKB-UniRule"/>
</dbReference>
<dbReference type="GO" id="GO:0019700">
    <property type="term" value="P:organic phosphonate catabolic process"/>
    <property type="evidence" value="ECO:0007669"/>
    <property type="project" value="InterPro"/>
</dbReference>
<dbReference type="Gene3D" id="3.90.1150.10">
    <property type="entry name" value="Aspartate Aminotransferase, domain 1"/>
    <property type="match status" value="1"/>
</dbReference>
<dbReference type="Gene3D" id="3.40.640.10">
    <property type="entry name" value="Type I PLP-dependent aspartate aminotransferase-like (Major domain)"/>
    <property type="match status" value="1"/>
</dbReference>
<dbReference type="HAMAP" id="MF_01376">
    <property type="entry name" value="PhnW_aminotrans_5"/>
    <property type="match status" value="1"/>
</dbReference>
<dbReference type="InterPro" id="IPR000192">
    <property type="entry name" value="Aminotrans_V_dom"/>
</dbReference>
<dbReference type="InterPro" id="IPR012703">
    <property type="entry name" value="NH2EtPonate_pyrv_transaminase"/>
</dbReference>
<dbReference type="InterPro" id="IPR015424">
    <property type="entry name" value="PyrdxlP-dep_Trfase"/>
</dbReference>
<dbReference type="InterPro" id="IPR015421">
    <property type="entry name" value="PyrdxlP-dep_Trfase_major"/>
</dbReference>
<dbReference type="InterPro" id="IPR015422">
    <property type="entry name" value="PyrdxlP-dep_Trfase_small"/>
</dbReference>
<dbReference type="InterPro" id="IPR024169">
    <property type="entry name" value="SP_NH2Trfase/AEP_transaminase"/>
</dbReference>
<dbReference type="NCBIfam" id="TIGR03301">
    <property type="entry name" value="PhnW-AepZ"/>
    <property type="match status" value="1"/>
</dbReference>
<dbReference type="NCBIfam" id="NF010006">
    <property type="entry name" value="PRK13479.1"/>
    <property type="match status" value="1"/>
</dbReference>
<dbReference type="NCBIfam" id="TIGR02326">
    <property type="entry name" value="transamin_PhnW"/>
    <property type="match status" value="1"/>
</dbReference>
<dbReference type="PANTHER" id="PTHR42778">
    <property type="entry name" value="2-AMINOETHYLPHOSPHONATE--PYRUVATE TRANSAMINASE"/>
    <property type="match status" value="1"/>
</dbReference>
<dbReference type="PANTHER" id="PTHR42778:SF1">
    <property type="entry name" value="2-AMINOETHYLPHOSPHONATE--PYRUVATE TRANSAMINASE"/>
    <property type="match status" value="1"/>
</dbReference>
<dbReference type="Pfam" id="PF00266">
    <property type="entry name" value="Aminotran_5"/>
    <property type="match status" value="1"/>
</dbReference>
<dbReference type="PIRSF" id="PIRSF000524">
    <property type="entry name" value="SPT"/>
    <property type="match status" value="1"/>
</dbReference>
<dbReference type="SUPFAM" id="SSF53383">
    <property type="entry name" value="PLP-dependent transferases"/>
    <property type="match status" value="1"/>
</dbReference>
<proteinExistence type="inferred from homology"/>
<name>PHNW_BACFN</name>